<dbReference type="EMBL" id="DQ908861">
    <property type="protein sequence ID" value="ABI83681.1"/>
    <property type="molecule type" value="Genomic_DNA"/>
</dbReference>
<dbReference type="RefSeq" id="YP_005089514.1">
    <property type="nucleotide sequence ID" value="NC_016729.1"/>
</dbReference>
<dbReference type="SMR" id="Q06DU9"/>
<dbReference type="GeneID" id="11540962"/>
<dbReference type="GO" id="GO:0009535">
    <property type="term" value="C:chloroplast thylakoid membrane"/>
    <property type="evidence" value="ECO:0007669"/>
    <property type="project" value="UniProtKB-SubCell"/>
</dbReference>
<dbReference type="GO" id="GO:0009512">
    <property type="term" value="C:cytochrome b6f complex"/>
    <property type="evidence" value="ECO:0007669"/>
    <property type="project" value="InterPro"/>
</dbReference>
<dbReference type="GO" id="GO:0045158">
    <property type="term" value="F:electron transporter, transferring electrons within cytochrome b6/f complex of photosystem II activity"/>
    <property type="evidence" value="ECO:0007669"/>
    <property type="project" value="UniProtKB-UniRule"/>
</dbReference>
<dbReference type="GO" id="GO:0015979">
    <property type="term" value="P:photosynthesis"/>
    <property type="evidence" value="ECO:0007669"/>
    <property type="project" value="UniProtKB-KW"/>
</dbReference>
<dbReference type="HAMAP" id="MF_00433">
    <property type="entry name" value="Cytb6_f_PetL"/>
    <property type="match status" value="1"/>
</dbReference>
<dbReference type="InterPro" id="IPR007802">
    <property type="entry name" value="Cyt_b6/f_cplx_su6"/>
</dbReference>
<dbReference type="PANTHER" id="PTHR37266">
    <property type="entry name" value="CYTOCHROME B6-F COMPLEX SUBUNIT 6"/>
    <property type="match status" value="1"/>
</dbReference>
<dbReference type="PANTHER" id="PTHR37266:SF1">
    <property type="entry name" value="CYTOCHROME B6-F COMPLEX SUBUNIT 6"/>
    <property type="match status" value="1"/>
</dbReference>
<dbReference type="Pfam" id="PF05115">
    <property type="entry name" value="PetL"/>
    <property type="match status" value="1"/>
</dbReference>
<keyword id="KW-0150">Chloroplast</keyword>
<keyword id="KW-0249">Electron transport</keyword>
<keyword id="KW-0472">Membrane</keyword>
<keyword id="KW-0602">Photosynthesis</keyword>
<keyword id="KW-0934">Plastid</keyword>
<keyword id="KW-0793">Thylakoid</keyword>
<keyword id="KW-0812">Transmembrane</keyword>
<keyword id="KW-1133">Transmembrane helix</keyword>
<keyword id="KW-0813">Transport</keyword>
<reference key="1">
    <citation type="submission" date="2006-08" db="EMBL/GenBank/DDBJ databases">
        <title>Origin and evolution of North American polyploid Silene (Caryophyllaceae).</title>
        <authorList>
            <person name="Popp M."/>
            <person name="Oxelman B."/>
        </authorList>
    </citation>
    <scope>NUCLEOTIDE SEQUENCE [GENOMIC DNA]</scope>
</reference>
<geneLocation type="chloroplast"/>
<sequence>MPTLTSYFGFLLAALTITSVLFIGLNKIRLI</sequence>
<organism>
    <name type="scientific">Silene conica</name>
    <name type="common">Striped corn catchfly</name>
    <name type="synonym">Pleconax conica</name>
    <dbReference type="NCBI Taxonomy" id="39875"/>
    <lineage>
        <taxon>Eukaryota</taxon>
        <taxon>Viridiplantae</taxon>
        <taxon>Streptophyta</taxon>
        <taxon>Embryophyta</taxon>
        <taxon>Tracheophyta</taxon>
        <taxon>Spermatophyta</taxon>
        <taxon>Magnoliopsida</taxon>
        <taxon>eudicotyledons</taxon>
        <taxon>Gunneridae</taxon>
        <taxon>Pentapetalae</taxon>
        <taxon>Caryophyllales</taxon>
        <taxon>Caryophyllaceae</taxon>
        <taxon>Sileneae</taxon>
        <taxon>Silene</taxon>
        <taxon>Silene subgen. Behenantha</taxon>
        <taxon>Silene sect. Conoimorpha</taxon>
    </lineage>
</organism>
<name>PETL_SILCO</name>
<proteinExistence type="inferred from homology"/>
<protein>
    <recommendedName>
        <fullName evidence="1">Cytochrome b6-f complex subunit 6</fullName>
    </recommendedName>
    <alternativeName>
        <fullName evidence="1">Cytochrome b6-f complex subunit PetL</fullName>
    </alternativeName>
    <alternativeName>
        <fullName evidence="1">Cytochrome b6-f complex subunit VI</fullName>
    </alternativeName>
</protein>
<accession>Q06DU9</accession>
<feature type="chain" id="PRO_0000278087" description="Cytochrome b6-f complex subunit 6">
    <location>
        <begin position="1"/>
        <end position="31"/>
    </location>
</feature>
<feature type="transmembrane region" description="Helical" evidence="1">
    <location>
        <begin position="4"/>
        <end position="24"/>
    </location>
</feature>
<evidence type="ECO:0000255" key="1">
    <source>
        <dbReference type="HAMAP-Rule" id="MF_00433"/>
    </source>
</evidence>
<comment type="function">
    <text evidence="1">Component of the cytochrome b6-f complex, which mediates electron transfer between photosystem II (PSII) and photosystem I (PSI), cyclic electron flow around PSI, and state transitions. PetL is important for photoautotrophic growth as well as for electron transfer efficiency and stability of the cytochrome b6-f complex.</text>
</comment>
<comment type="subunit">
    <text evidence="1">The 4 large subunits of the cytochrome b6-f complex are cytochrome b6, subunit IV (17 kDa polypeptide, PetD), cytochrome f and the Rieske protein, while the 4 small subunits are PetG, PetL, PetM and PetN. The complex functions as a dimer.</text>
</comment>
<comment type="subcellular location">
    <subcellularLocation>
        <location evidence="1">Plastid</location>
        <location evidence="1">Chloroplast thylakoid membrane</location>
        <topology evidence="1">Single-pass membrane protein</topology>
    </subcellularLocation>
</comment>
<comment type="similarity">
    <text evidence="1">Belongs to the PetL family.</text>
</comment>
<gene>
    <name evidence="1" type="primary">petL</name>
</gene>